<reference key="1">
    <citation type="submission" date="2007-02" db="EMBL/GenBank/DDBJ databases">
        <title>Complete sequence of chromosome 1 of Rhodobacter sphaeroides ATCC 17029.</title>
        <authorList>
            <person name="Copeland A."/>
            <person name="Lucas S."/>
            <person name="Lapidus A."/>
            <person name="Barry K."/>
            <person name="Detter J.C."/>
            <person name="Glavina del Rio T."/>
            <person name="Hammon N."/>
            <person name="Israni S."/>
            <person name="Dalin E."/>
            <person name="Tice H."/>
            <person name="Pitluck S."/>
            <person name="Kiss H."/>
            <person name="Brettin T."/>
            <person name="Bruce D."/>
            <person name="Han C."/>
            <person name="Tapia R."/>
            <person name="Gilna P."/>
            <person name="Schmutz J."/>
            <person name="Larimer F."/>
            <person name="Land M."/>
            <person name="Hauser L."/>
            <person name="Kyrpides N."/>
            <person name="Mikhailova N."/>
            <person name="Richardson P."/>
            <person name="Mackenzie C."/>
            <person name="Choudhary M."/>
            <person name="Donohue T.J."/>
            <person name="Kaplan S."/>
        </authorList>
    </citation>
    <scope>NUCLEOTIDE SEQUENCE [LARGE SCALE GENOMIC DNA]</scope>
    <source>
        <strain>ATCC 17029 / ATH 2.4.9</strain>
    </source>
</reference>
<keyword id="KW-0067">ATP-binding</keyword>
<keyword id="KW-0436">Ligase</keyword>
<keyword id="KW-0547">Nucleotide-binding</keyword>
<keyword id="KW-0648">Protein biosynthesis</keyword>
<sequence>MLDLTYEAPKPKVIAGAKHDWELVIGMEIHAQVSSNAKLFSGASTTFGAEPNSNVSFVDCAMPGMLPVINEFCVAQAVRTGLGLKAQINLVSAFDRKNYFYPDLPQGYQISQLYHPIVGEGEVLVELAPGIARLVRIERIHLEQDAGKSIHDMDPNLSFVDFNRTGVALMEIVSRPDIRGPEEAAAYVAKLRQILRYLGTCDGNMQNGNLRADVNVSVCRPGQYEKYQETQDFSHLGTRCEIKNMNSMRFIQQAIDYEARRQIAILEDGGKVVQETRLYDPDKGETRSMRSKEEAHDYRYFPDPDLLPLEIEQGWVDEIAASMPELPDAKKARFMADYGVTDYDANVLTAELDAAAYFEEVARGRDGKQAANWVINELFGRLNKQGLTIADPPVKAGQLGGVLDLIASGEISGKMAKDLFEILWTEGGDPAEVAAARGMKQVTDTGAIETAVDEIIAANPAQVEKAKANPKLAGWFVGQVIKATGGKANPAAVNQIVAQKLGL</sequence>
<organism>
    <name type="scientific">Cereibacter sphaeroides (strain ATCC 17029 / ATH 2.4.9)</name>
    <name type="common">Rhodobacter sphaeroides</name>
    <dbReference type="NCBI Taxonomy" id="349101"/>
    <lineage>
        <taxon>Bacteria</taxon>
        <taxon>Pseudomonadati</taxon>
        <taxon>Pseudomonadota</taxon>
        <taxon>Alphaproteobacteria</taxon>
        <taxon>Rhodobacterales</taxon>
        <taxon>Paracoccaceae</taxon>
        <taxon>Cereibacter</taxon>
    </lineage>
</organism>
<evidence type="ECO:0000255" key="1">
    <source>
        <dbReference type="HAMAP-Rule" id="MF_00121"/>
    </source>
</evidence>
<dbReference type="EC" id="6.3.5.-" evidence="1"/>
<dbReference type="EMBL" id="CP000577">
    <property type="protein sequence ID" value="ABN75809.1"/>
    <property type="molecule type" value="Genomic_DNA"/>
</dbReference>
<dbReference type="RefSeq" id="WP_011840545.1">
    <property type="nucleotide sequence ID" value="NC_009049.1"/>
</dbReference>
<dbReference type="SMR" id="A3PHJ3"/>
<dbReference type="KEGG" id="rsh:Rsph17029_0696"/>
<dbReference type="HOGENOM" id="CLU_019240_0_0_5"/>
<dbReference type="GO" id="GO:0050566">
    <property type="term" value="F:asparaginyl-tRNA synthase (glutamine-hydrolyzing) activity"/>
    <property type="evidence" value="ECO:0007669"/>
    <property type="project" value="RHEA"/>
</dbReference>
<dbReference type="GO" id="GO:0005524">
    <property type="term" value="F:ATP binding"/>
    <property type="evidence" value="ECO:0007669"/>
    <property type="project" value="UniProtKB-KW"/>
</dbReference>
<dbReference type="GO" id="GO:0050567">
    <property type="term" value="F:glutaminyl-tRNA synthase (glutamine-hydrolyzing) activity"/>
    <property type="evidence" value="ECO:0007669"/>
    <property type="project" value="UniProtKB-UniRule"/>
</dbReference>
<dbReference type="GO" id="GO:0070681">
    <property type="term" value="P:glutaminyl-tRNAGln biosynthesis via transamidation"/>
    <property type="evidence" value="ECO:0007669"/>
    <property type="project" value="TreeGrafter"/>
</dbReference>
<dbReference type="GO" id="GO:0006412">
    <property type="term" value="P:translation"/>
    <property type="evidence" value="ECO:0007669"/>
    <property type="project" value="UniProtKB-UniRule"/>
</dbReference>
<dbReference type="FunFam" id="1.10.10.410:FF:000001">
    <property type="entry name" value="Aspartyl/glutamyl-tRNA(Asn/Gln) amidotransferase subunit B"/>
    <property type="match status" value="1"/>
</dbReference>
<dbReference type="FunFam" id="1.10.150.380:FF:000001">
    <property type="entry name" value="Aspartyl/glutamyl-tRNA(Asn/Gln) amidotransferase subunit B"/>
    <property type="match status" value="1"/>
</dbReference>
<dbReference type="Gene3D" id="1.10.10.410">
    <property type="match status" value="1"/>
</dbReference>
<dbReference type="Gene3D" id="1.10.150.380">
    <property type="entry name" value="GatB domain, N-terminal subdomain"/>
    <property type="match status" value="1"/>
</dbReference>
<dbReference type="HAMAP" id="MF_00121">
    <property type="entry name" value="GatB"/>
    <property type="match status" value="1"/>
</dbReference>
<dbReference type="InterPro" id="IPR017959">
    <property type="entry name" value="Asn/Gln-tRNA_amidoTrfase_suB/E"/>
</dbReference>
<dbReference type="InterPro" id="IPR006075">
    <property type="entry name" value="Asn/Gln-tRNA_Trfase_suB/E_cat"/>
</dbReference>
<dbReference type="InterPro" id="IPR018027">
    <property type="entry name" value="Asn/Gln_amidotransferase"/>
</dbReference>
<dbReference type="InterPro" id="IPR003789">
    <property type="entry name" value="Asn/Gln_tRNA_amidoTrase-B-like"/>
</dbReference>
<dbReference type="InterPro" id="IPR004413">
    <property type="entry name" value="GatB"/>
</dbReference>
<dbReference type="InterPro" id="IPR042114">
    <property type="entry name" value="GatB_C_1"/>
</dbReference>
<dbReference type="InterPro" id="IPR023168">
    <property type="entry name" value="GatB_Yqey_C_2"/>
</dbReference>
<dbReference type="InterPro" id="IPR017958">
    <property type="entry name" value="Gln-tRNA_amidoTrfase_suB_CS"/>
</dbReference>
<dbReference type="InterPro" id="IPR014746">
    <property type="entry name" value="Gln_synth/guanido_kin_cat_dom"/>
</dbReference>
<dbReference type="NCBIfam" id="TIGR00133">
    <property type="entry name" value="gatB"/>
    <property type="match status" value="1"/>
</dbReference>
<dbReference type="NCBIfam" id="NF004012">
    <property type="entry name" value="PRK05477.1-2"/>
    <property type="match status" value="1"/>
</dbReference>
<dbReference type="NCBIfam" id="NF004014">
    <property type="entry name" value="PRK05477.1-4"/>
    <property type="match status" value="1"/>
</dbReference>
<dbReference type="NCBIfam" id="NF004015">
    <property type="entry name" value="PRK05477.1-5"/>
    <property type="match status" value="1"/>
</dbReference>
<dbReference type="PANTHER" id="PTHR11659">
    <property type="entry name" value="GLUTAMYL-TRNA GLN AMIDOTRANSFERASE SUBUNIT B MITOCHONDRIAL AND PROKARYOTIC PET112-RELATED"/>
    <property type="match status" value="1"/>
</dbReference>
<dbReference type="PANTHER" id="PTHR11659:SF0">
    <property type="entry name" value="GLUTAMYL-TRNA(GLN) AMIDOTRANSFERASE SUBUNIT B, MITOCHONDRIAL"/>
    <property type="match status" value="1"/>
</dbReference>
<dbReference type="Pfam" id="PF02934">
    <property type="entry name" value="GatB_N"/>
    <property type="match status" value="1"/>
</dbReference>
<dbReference type="Pfam" id="PF02637">
    <property type="entry name" value="GatB_Yqey"/>
    <property type="match status" value="1"/>
</dbReference>
<dbReference type="SMART" id="SM00845">
    <property type="entry name" value="GatB_Yqey"/>
    <property type="match status" value="1"/>
</dbReference>
<dbReference type="SUPFAM" id="SSF89095">
    <property type="entry name" value="GatB/YqeY motif"/>
    <property type="match status" value="1"/>
</dbReference>
<dbReference type="SUPFAM" id="SSF55931">
    <property type="entry name" value="Glutamine synthetase/guanido kinase"/>
    <property type="match status" value="1"/>
</dbReference>
<dbReference type="PROSITE" id="PS01234">
    <property type="entry name" value="GATB"/>
    <property type="match status" value="1"/>
</dbReference>
<protein>
    <recommendedName>
        <fullName evidence="1">Aspartyl/glutamyl-tRNA(Asn/Gln) amidotransferase subunit B</fullName>
        <shortName evidence="1">Asp/Glu-ADT subunit B</shortName>
        <ecNumber evidence="1">6.3.5.-</ecNumber>
    </recommendedName>
</protein>
<name>GATB_CERS1</name>
<feature type="chain" id="PRO_1000016031" description="Aspartyl/glutamyl-tRNA(Asn/Gln) amidotransferase subunit B">
    <location>
        <begin position="1"/>
        <end position="503"/>
    </location>
</feature>
<comment type="function">
    <text evidence="1">Allows the formation of correctly charged Asn-tRNA(Asn) or Gln-tRNA(Gln) through the transamidation of misacylated Asp-tRNA(Asn) or Glu-tRNA(Gln) in organisms which lack either or both of asparaginyl-tRNA or glutaminyl-tRNA synthetases. The reaction takes place in the presence of glutamine and ATP through an activated phospho-Asp-tRNA(Asn) or phospho-Glu-tRNA(Gln).</text>
</comment>
<comment type="catalytic activity">
    <reaction evidence="1">
        <text>L-glutamyl-tRNA(Gln) + L-glutamine + ATP + H2O = L-glutaminyl-tRNA(Gln) + L-glutamate + ADP + phosphate + H(+)</text>
        <dbReference type="Rhea" id="RHEA:17521"/>
        <dbReference type="Rhea" id="RHEA-COMP:9681"/>
        <dbReference type="Rhea" id="RHEA-COMP:9684"/>
        <dbReference type="ChEBI" id="CHEBI:15377"/>
        <dbReference type="ChEBI" id="CHEBI:15378"/>
        <dbReference type="ChEBI" id="CHEBI:29985"/>
        <dbReference type="ChEBI" id="CHEBI:30616"/>
        <dbReference type="ChEBI" id="CHEBI:43474"/>
        <dbReference type="ChEBI" id="CHEBI:58359"/>
        <dbReference type="ChEBI" id="CHEBI:78520"/>
        <dbReference type="ChEBI" id="CHEBI:78521"/>
        <dbReference type="ChEBI" id="CHEBI:456216"/>
    </reaction>
</comment>
<comment type="catalytic activity">
    <reaction evidence="1">
        <text>L-aspartyl-tRNA(Asn) + L-glutamine + ATP + H2O = L-asparaginyl-tRNA(Asn) + L-glutamate + ADP + phosphate + 2 H(+)</text>
        <dbReference type="Rhea" id="RHEA:14513"/>
        <dbReference type="Rhea" id="RHEA-COMP:9674"/>
        <dbReference type="Rhea" id="RHEA-COMP:9677"/>
        <dbReference type="ChEBI" id="CHEBI:15377"/>
        <dbReference type="ChEBI" id="CHEBI:15378"/>
        <dbReference type="ChEBI" id="CHEBI:29985"/>
        <dbReference type="ChEBI" id="CHEBI:30616"/>
        <dbReference type="ChEBI" id="CHEBI:43474"/>
        <dbReference type="ChEBI" id="CHEBI:58359"/>
        <dbReference type="ChEBI" id="CHEBI:78515"/>
        <dbReference type="ChEBI" id="CHEBI:78516"/>
        <dbReference type="ChEBI" id="CHEBI:456216"/>
    </reaction>
</comment>
<comment type="subunit">
    <text evidence="1">Heterotrimer of A, B and C subunits.</text>
</comment>
<comment type="similarity">
    <text evidence="1">Belongs to the GatB/GatE family. GatB subfamily.</text>
</comment>
<gene>
    <name evidence="1" type="primary">gatB</name>
    <name type="ordered locus">Rsph17029_0696</name>
</gene>
<proteinExistence type="inferred from homology"/>
<accession>A3PHJ3</accession>